<comment type="function">
    <text evidence="1 6 8">E3 ubiquitin-protein ligase that acts as a negative regulator of NOD2 signaling by mediating ubiquitination and degradation of RIPK2 (PubMed:28656966). Also catalyzes ubiquitination and proteasomal degradation of CANX within the endoplasmic reticulum (PubMed:21205830). Could have a role in spermatogenesis (By similarity).</text>
</comment>
<comment type="catalytic activity">
    <reaction evidence="8 11">
        <text>S-ubiquitinyl-[E2 ubiquitin-conjugating enzyme]-L-cysteine + [acceptor protein]-L-lysine = [E2 ubiquitin-conjugating enzyme]-L-cysteine + N(6)-ubiquitinyl-[acceptor protein]-L-lysine.</text>
        <dbReference type="EC" id="2.3.2.27"/>
    </reaction>
</comment>
<comment type="pathway">
    <text evidence="6 8">Protein modification; protein ubiquitination.</text>
</comment>
<comment type="subunit">
    <text evidence="6">Interacts with CANX.</text>
</comment>
<comment type="interaction">
    <interactant intactId="EBI-2129267">
        <id>Q8WWF5</id>
    </interactant>
    <interactant intactId="EBI-6393623">
        <id>P21589</id>
        <label>NT5E</label>
    </interactant>
    <organismsDiffer>false</organismsDiffer>
    <experiments>3</experiments>
</comment>
<comment type="interaction">
    <interactant intactId="EBI-2129267">
        <id>Q8WWF5</id>
    </interactant>
    <interactant intactId="EBI-14115717">
        <id>Q8N7U7-2</id>
        <label>TPRX1</label>
    </interactant>
    <organismsDiffer>false</organismsDiffer>
    <experiments>3</experiments>
</comment>
<comment type="interaction">
    <interactant intactId="EBI-2129267">
        <id>Q8WWF5</id>
    </interactant>
    <interactant intactId="EBI-10179682">
        <id>O00526</id>
        <label>UPK2</label>
    </interactant>
    <organismsDiffer>false</organismsDiffer>
    <experiments>3</experiments>
</comment>
<comment type="subcellular location">
    <subcellularLocation>
        <location evidence="6 7 8">Endoplasmic reticulum membrane</location>
        <topology evidence="2">Single-pass type I membrane protein</topology>
    </subcellularLocation>
</comment>
<comment type="domain">
    <text evidence="6">The RING-type zinc finger is involved in CANX ubiquitination and degradation, but is not required for interaction with CANX.</text>
</comment>
<comment type="sequence caution" evidence="10">
    <conflict type="erroneous initiation">
        <sequence resource="EMBL-CDS" id="AAC62428"/>
    </conflict>
    <text>Truncated N-terminus.</text>
</comment>
<gene>
    <name evidence="12" type="primary">ZNRF4</name>
    <name evidence="12" type="synonym">RNF204</name>
</gene>
<protein>
    <recommendedName>
        <fullName evidence="10">E3 ubiquitin-protein ligase ZNRF4</fullName>
        <ecNumber evidence="8 11">2.3.2.27</ecNumber>
    </recommendedName>
    <alternativeName>
        <fullName evidence="9">Nixin</fullName>
    </alternativeName>
    <alternativeName>
        <fullName evidence="10">RING finger protein 204</fullName>
    </alternativeName>
    <alternativeName>
        <fullName>RING-type E3 ubiquitin transferase ZNRF4</fullName>
    </alternativeName>
    <alternativeName>
        <fullName evidence="10">Zinc/RING finger protein 4</fullName>
    </alternativeName>
</protein>
<evidence type="ECO:0000250" key="1">
    <source>
        <dbReference type="UniProtKB" id="Q9DAH2"/>
    </source>
</evidence>
<evidence type="ECO:0000255" key="2"/>
<evidence type="ECO:0000255" key="3">
    <source>
        <dbReference type="PROSITE-ProRule" id="PRU00175"/>
    </source>
</evidence>
<evidence type="ECO:0000256" key="4">
    <source>
        <dbReference type="SAM" id="MobiDB-lite"/>
    </source>
</evidence>
<evidence type="ECO:0000269" key="5">
    <source>
    </source>
</evidence>
<evidence type="ECO:0000269" key="6">
    <source>
    </source>
</evidence>
<evidence type="ECO:0000269" key="7">
    <source>
    </source>
</evidence>
<evidence type="ECO:0000269" key="8">
    <source>
    </source>
</evidence>
<evidence type="ECO:0000303" key="9">
    <source>
    </source>
</evidence>
<evidence type="ECO:0000305" key="10"/>
<evidence type="ECO:0000305" key="11">
    <source>
    </source>
</evidence>
<evidence type="ECO:0000312" key="12">
    <source>
        <dbReference type="HGNC" id="HGNC:17726"/>
    </source>
</evidence>
<reference key="1">
    <citation type="journal article" date="2004" name="Nat. Genet.">
        <title>Complete sequencing and characterization of 21,243 full-length human cDNAs.</title>
        <authorList>
            <person name="Ota T."/>
            <person name="Suzuki Y."/>
            <person name="Nishikawa T."/>
            <person name="Otsuki T."/>
            <person name="Sugiyama T."/>
            <person name="Irie R."/>
            <person name="Wakamatsu A."/>
            <person name="Hayashi K."/>
            <person name="Sato H."/>
            <person name="Nagai K."/>
            <person name="Kimura K."/>
            <person name="Makita H."/>
            <person name="Sekine M."/>
            <person name="Obayashi M."/>
            <person name="Nishi T."/>
            <person name="Shibahara T."/>
            <person name="Tanaka T."/>
            <person name="Ishii S."/>
            <person name="Yamamoto J."/>
            <person name="Saito K."/>
            <person name="Kawai Y."/>
            <person name="Isono Y."/>
            <person name="Nakamura Y."/>
            <person name="Nagahari K."/>
            <person name="Murakami K."/>
            <person name="Yasuda T."/>
            <person name="Iwayanagi T."/>
            <person name="Wagatsuma M."/>
            <person name="Shiratori A."/>
            <person name="Sudo H."/>
            <person name="Hosoiri T."/>
            <person name="Kaku Y."/>
            <person name="Kodaira H."/>
            <person name="Kondo H."/>
            <person name="Sugawara M."/>
            <person name="Takahashi M."/>
            <person name="Kanda K."/>
            <person name="Yokoi T."/>
            <person name="Furuya T."/>
            <person name="Kikkawa E."/>
            <person name="Omura Y."/>
            <person name="Abe K."/>
            <person name="Kamihara K."/>
            <person name="Katsuta N."/>
            <person name="Sato K."/>
            <person name="Tanikawa M."/>
            <person name="Yamazaki M."/>
            <person name="Ninomiya K."/>
            <person name="Ishibashi T."/>
            <person name="Yamashita H."/>
            <person name="Murakawa K."/>
            <person name="Fujimori K."/>
            <person name="Tanai H."/>
            <person name="Kimata M."/>
            <person name="Watanabe M."/>
            <person name="Hiraoka S."/>
            <person name="Chiba Y."/>
            <person name="Ishida S."/>
            <person name="Ono Y."/>
            <person name="Takiguchi S."/>
            <person name="Watanabe S."/>
            <person name="Yosida M."/>
            <person name="Hotuta T."/>
            <person name="Kusano J."/>
            <person name="Kanehori K."/>
            <person name="Takahashi-Fujii A."/>
            <person name="Hara H."/>
            <person name="Tanase T.-O."/>
            <person name="Nomura Y."/>
            <person name="Togiya S."/>
            <person name="Komai F."/>
            <person name="Hara R."/>
            <person name="Takeuchi K."/>
            <person name="Arita M."/>
            <person name="Imose N."/>
            <person name="Musashino K."/>
            <person name="Yuuki H."/>
            <person name="Oshima A."/>
            <person name="Sasaki N."/>
            <person name="Aotsuka S."/>
            <person name="Yoshikawa Y."/>
            <person name="Matsunawa H."/>
            <person name="Ichihara T."/>
            <person name="Shiohata N."/>
            <person name="Sano S."/>
            <person name="Moriya S."/>
            <person name="Momiyama H."/>
            <person name="Satoh N."/>
            <person name="Takami S."/>
            <person name="Terashima Y."/>
            <person name="Suzuki O."/>
            <person name="Nakagawa S."/>
            <person name="Senoh A."/>
            <person name="Mizoguchi H."/>
            <person name="Goto Y."/>
            <person name="Shimizu F."/>
            <person name="Wakebe H."/>
            <person name="Hishigaki H."/>
            <person name="Watanabe T."/>
            <person name="Sugiyama A."/>
            <person name="Takemoto M."/>
            <person name="Kawakami B."/>
            <person name="Yamazaki M."/>
            <person name="Watanabe K."/>
            <person name="Kumagai A."/>
            <person name="Itakura S."/>
            <person name="Fukuzumi Y."/>
            <person name="Fujimori Y."/>
            <person name="Komiyama M."/>
            <person name="Tashiro H."/>
            <person name="Tanigami A."/>
            <person name="Fujiwara T."/>
            <person name="Ono T."/>
            <person name="Yamada K."/>
            <person name="Fujii Y."/>
            <person name="Ozaki K."/>
            <person name="Hirao M."/>
            <person name="Ohmori Y."/>
            <person name="Kawabata A."/>
            <person name="Hikiji T."/>
            <person name="Kobatake N."/>
            <person name="Inagaki H."/>
            <person name="Ikema Y."/>
            <person name="Okamoto S."/>
            <person name="Okitani R."/>
            <person name="Kawakami T."/>
            <person name="Noguchi S."/>
            <person name="Itoh T."/>
            <person name="Shigeta K."/>
            <person name="Senba T."/>
            <person name="Matsumura K."/>
            <person name="Nakajima Y."/>
            <person name="Mizuno T."/>
            <person name="Morinaga M."/>
            <person name="Sasaki M."/>
            <person name="Togashi T."/>
            <person name="Oyama M."/>
            <person name="Hata H."/>
            <person name="Watanabe M."/>
            <person name="Komatsu T."/>
            <person name="Mizushima-Sugano J."/>
            <person name="Satoh T."/>
            <person name="Shirai Y."/>
            <person name="Takahashi Y."/>
            <person name="Nakagawa K."/>
            <person name="Okumura K."/>
            <person name="Nagase T."/>
            <person name="Nomura N."/>
            <person name="Kikuchi H."/>
            <person name="Masuho Y."/>
            <person name="Yamashita R."/>
            <person name="Nakai K."/>
            <person name="Yada T."/>
            <person name="Nakamura Y."/>
            <person name="Ohara O."/>
            <person name="Isogai T."/>
            <person name="Sugano S."/>
        </authorList>
    </citation>
    <scope>NUCLEOTIDE SEQUENCE [LARGE SCALE MRNA]</scope>
    <source>
        <tissue>Testis</tissue>
    </source>
</reference>
<reference key="2">
    <citation type="journal article" date="2004" name="Nature">
        <title>The DNA sequence and biology of human chromosome 19.</title>
        <authorList>
            <person name="Grimwood J."/>
            <person name="Gordon L.A."/>
            <person name="Olsen A.S."/>
            <person name="Terry A."/>
            <person name="Schmutz J."/>
            <person name="Lamerdin J.E."/>
            <person name="Hellsten U."/>
            <person name="Goodstein D."/>
            <person name="Couronne O."/>
            <person name="Tran-Gyamfi M."/>
            <person name="Aerts A."/>
            <person name="Altherr M."/>
            <person name="Ashworth L."/>
            <person name="Bajorek E."/>
            <person name="Black S."/>
            <person name="Branscomb E."/>
            <person name="Caenepeel S."/>
            <person name="Carrano A.V."/>
            <person name="Caoile C."/>
            <person name="Chan Y.M."/>
            <person name="Christensen M."/>
            <person name="Cleland C.A."/>
            <person name="Copeland A."/>
            <person name="Dalin E."/>
            <person name="Dehal P."/>
            <person name="Denys M."/>
            <person name="Detter J.C."/>
            <person name="Escobar J."/>
            <person name="Flowers D."/>
            <person name="Fotopulos D."/>
            <person name="Garcia C."/>
            <person name="Georgescu A.M."/>
            <person name="Glavina T."/>
            <person name="Gomez M."/>
            <person name="Gonzales E."/>
            <person name="Groza M."/>
            <person name="Hammon N."/>
            <person name="Hawkins T."/>
            <person name="Haydu L."/>
            <person name="Ho I."/>
            <person name="Huang W."/>
            <person name="Israni S."/>
            <person name="Jett J."/>
            <person name="Kadner K."/>
            <person name="Kimball H."/>
            <person name="Kobayashi A."/>
            <person name="Larionov V."/>
            <person name="Leem S.-H."/>
            <person name="Lopez F."/>
            <person name="Lou Y."/>
            <person name="Lowry S."/>
            <person name="Malfatti S."/>
            <person name="Martinez D."/>
            <person name="McCready P.M."/>
            <person name="Medina C."/>
            <person name="Morgan J."/>
            <person name="Nelson K."/>
            <person name="Nolan M."/>
            <person name="Ovcharenko I."/>
            <person name="Pitluck S."/>
            <person name="Pollard M."/>
            <person name="Popkie A.P."/>
            <person name="Predki P."/>
            <person name="Quan G."/>
            <person name="Ramirez L."/>
            <person name="Rash S."/>
            <person name="Retterer J."/>
            <person name="Rodriguez A."/>
            <person name="Rogers S."/>
            <person name="Salamov A."/>
            <person name="Salazar A."/>
            <person name="She X."/>
            <person name="Smith D."/>
            <person name="Slezak T."/>
            <person name="Solovyev V."/>
            <person name="Thayer N."/>
            <person name="Tice H."/>
            <person name="Tsai M."/>
            <person name="Ustaszewska A."/>
            <person name="Vo N."/>
            <person name="Wagner M."/>
            <person name="Wheeler J."/>
            <person name="Wu K."/>
            <person name="Xie G."/>
            <person name="Yang J."/>
            <person name="Dubchak I."/>
            <person name="Furey T.S."/>
            <person name="DeJong P."/>
            <person name="Dickson M."/>
            <person name="Gordon D."/>
            <person name="Eichler E.E."/>
            <person name="Pennacchio L.A."/>
            <person name="Richardson P."/>
            <person name="Stubbs L."/>
            <person name="Rokhsar D.S."/>
            <person name="Myers R.M."/>
            <person name="Rubin E.M."/>
            <person name="Lucas S.M."/>
        </authorList>
    </citation>
    <scope>NUCLEOTIDE SEQUENCE [LARGE SCALE GENOMIC DNA]</scope>
</reference>
<reference key="3">
    <citation type="submission" date="2005-09" db="EMBL/GenBank/DDBJ databases">
        <authorList>
            <person name="Mural R.J."/>
            <person name="Istrail S."/>
            <person name="Sutton G.G."/>
            <person name="Florea L."/>
            <person name="Halpern A.L."/>
            <person name="Mobarry C.M."/>
            <person name="Lippert R."/>
            <person name="Walenz B."/>
            <person name="Shatkay H."/>
            <person name="Dew I."/>
            <person name="Miller J.R."/>
            <person name="Flanigan M.J."/>
            <person name="Edwards N.J."/>
            <person name="Bolanos R."/>
            <person name="Fasulo D."/>
            <person name="Halldorsson B.V."/>
            <person name="Hannenhalli S."/>
            <person name="Turner R."/>
            <person name="Yooseph S."/>
            <person name="Lu F."/>
            <person name="Nusskern D.R."/>
            <person name="Shue B.C."/>
            <person name="Zheng X.H."/>
            <person name="Zhong F."/>
            <person name="Delcher A.L."/>
            <person name="Huson D.H."/>
            <person name="Kravitz S.A."/>
            <person name="Mouchard L."/>
            <person name="Reinert K."/>
            <person name="Remington K.A."/>
            <person name="Clark A.G."/>
            <person name="Waterman M.S."/>
            <person name="Eichler E.E."/>
            <person name="Adams M.D."/>
            <person name="Hunkapiller M.W."/>
            <person name="Myers E.W."/>
            <person name="Venter J.C."/>
        </authorList>
    </citation>
    <scope>NUCLEOTIDE SEQUENCE [LARGE SCALE GENOMIC DNA]</scope>
</reference>
<reference key="4">
    <citation type="journal article" date="2004" name="Genome Res.">
        <title>The status, quality, and expansion of the NIH full-length cDNA project: the Mammalian Gene Collection (MGC).</title>
        <authorList>
            <consortium name="The MGC Project Team"/>
        </authorList>
    </citation>
    <scope>NUCLEOTIDE SEQUENCE [LARGE SCALE MRNA]</scope>
    <scope>VARIANTS SER-37 AND GLN-78 AND HIS-163</scope>
    <source>
        <tissue>Testis</tissue>
    </source>
</reference>
<reference key="5">
    <citation type="journal article" date="2011" name="J. Biol. Chem.">
        <title>A systematic search for endoplasmic reticulum (ER) membrane-associated RING finger proteins identifies Nixin/ZNRF4 as a regulator of calnexin stability and ER homeostasis.</title>
        <authorList>
            <person name="Neutzner A."/>
            <person name="Neutzner M."/>
            <person name="Benischke A.S."/>
            <person name="Ryu S.W."/>
            <person name="Frank S."/>
            <person name="Youle R.J."/>
            <person name="Karbowski M."/>
        </authorList>
    </citation>
    <scope>FUNCTION</scope>
    <scope>PATHWAY</scope>
    <scope>INTERACTION WITH CANX</scope>
    <scope>SUBCELLULAR LOCATION</scope>
    <scope>TOPOLOGY</scope>
    <scope>DOMAIN</scope>
    <scope>GLYCOSYLATION AT ASN-107; ASN-152 AND ASN-229</scope>
    <scope>MUTAGENESIS OF ASN-107; ASN-152; ASN-229 AND 329-HIS--HIS-332</scope>
</reference>
<reference key="6">
    <citation type="journal article" date="2014" name="Biochem. J.">
        <title>Tumour-associated mutations of PA-TM-RING ubiquitin ligases RNF167/RNF13 identify the PA domain as a determinant for endosomal localization.</title>
        <authorList>
            <person name="van Dijk J.R."/>
            <person name="Yamazaki Y."/>
            <person name="Palmer R.H."/>
        </authorList>
    </citation>
    <scope>SUBCELLULAR LOCATION</scope>
</reference>
<reference key="7">
    <citation type="journal article" date="2017" name="Nat. Commun.">
        <title>E3 Ubiquitin ligase ZNRF4 negatively regulates NOD2 signalling and induces tolerance to MDP.</title>
        <authorList>
            <person name="Bist P."/>
            <person name="Cheong W.S."/>
            <person name="Ng A."/>
            <person name="Dikshit N."/>
            <person name="Kim B.H."/>
            <person name="Pulloor N.K."/>
            <person name="Khameneh H.J."/>
            <person name="Hedl M."/>
            <person name="Shenoy A.R."/>
            <person name="Balamuralidhar V."/>
            <person name="Malik N.B.A."/>
            <person name="Hong M."/>
            <person name="Neutzner A."/>
            <person name="Chin K.C."/>
            <person name="Kobayashi K.S."/>
            <person name="Bertoletti A."/>
            <person name="Mortellaro A."/>
            <person name="Abraham C."/>
            <person name="MacMicking J.D."/>
            <person name="Xavier R.J."/>
            <person name="Sukumaran B."/>
        </authorList>
    </citation>
    <scope>FUNCTION</scope>
    <scope>CATALYTIC ACTIVITY</scope>
    <scope>PATHWAY</scope>
    <scope>SUBCELLULAR LOCATION</scope>
    <scope>MUTAGENESIS OF 329-HIS--HIS-332</scope>
</reference>
<name>ZNRF4_HUMAN</name>
<accession>Q8WWF5</accession>
<accession>A8K886</accession>
<accession>O75866</accession>
<keyword id="KW-0256">Endoplasmic reticulum</keyword>
<keyword id="KW-0325">Glycoprotein</keyword>
<keyword id="KW-0472">Membrane</keyword>
<keyword id="KW-0479">Metal-binding</keyword>
<keyword id="KW-1267">Proteomics identification</keyword>
<keyword id="KW-1185">Reference proteome</keyword>
<keyword id="KW-0732">Signal</keyword>
<keyword id="KW-0808">Transferase</keyword>
<keyword id="KW-0812">Transmembrane</keyword>
<keyword id="KW-1133">Transmembrane helix</keyword>
<keyword id="KW-0862">Zinc</keyword>
<keyword id="KW-0863">Zinc-finger</keyword>
<feature type="signal peptide" evidence="2">
    <location>
        <begin position="1"/>
        <end position="27"/>
    </location>
</feature>
<feature type="chain" id="PRO_0000277861" description="E3 ubiquitin-protein ligase ZNRF4">
    <location>
        <begin position="28"/>
        <end position="429"/>
    </location>
</feature>
<feature type="topological domain" description="Lumenal" evidence="6">
    <location>
        <begin position="28"/>
        <end position="250"/>
    </location>
</feature>
<feature type="transmembrane region" description="Helical" evidence="2">
    <location>
        <begin position="251"/>
        <end position="271"/>
    </location>
</feature>
<feature type="topological domain" description="Cytoplasmic" evidence="6">
    <location>
        <begin position="272"/>
        <end position="429"/>
    </location>
</feature>
<feature type="domain" description="PA" evidence="2">
    <location>
        <begin position="151"/>
        <end position="223"/>
    </location>
</feature>
<feature type="zinc finger region" description="RING-type; atypical" evidence="3">
    <location>
        <begin position="309"/>
        <end position="352"/>
    </location>
</feature>
<feature type="region of interest" description="Disordered" evidence="4">
    <location>
        <begin position="30"/>
        <end position="67"/>
    </location>
</feature>
<feature type="compositionally biased region" description="Basic residues" evidence="4">
    <location>
        <begin position="37"/>
        <end position="49"/>
    </location>
</feature>
<feature type="glycosylation site" description="N-linked (GlcNAc...) asparagine" evidence="6">
    <location>
        <position position="107"/>
    </location>
</feature>
<feature type="glycosylation site" description="N-linked (GlcNAc...) asparagine" evidence="6">
    <location>
        <position position="152"/>
    </location>
</feature>
<feature type="glycosylation site" description="N-linked (GlcNAc...) asparagine" evidence="6">
    <location>
        <position position="229"/>
    </location>
</feature>
<feature type="sequence variant" id="VAR_030611" description="In dbSNP:rs2240743." evidence="5">
    <original>P</original>
    <variation>S</variation>
    <location>
        <position position="37"/>
    </location>
</feature>
<feature type="sequence variant" id="VAR_030612" description="In dbSNP:rs2240744." evidence="5">
    <original>R</original>
    <variation>Q</variation>
    <location>
        <position position="78"/>
    </location>
</feature>
<feature type="sequence variant" id="VAR_030613" description="In dbSNP:rs2240745.">
    <original>V</original>
    <variation>I</variation>
    <location>
        <position position="100"/>
    </location>
</feature>
<feature type="sequence variant" id="VAR_030614" description="In dbSNP:rs8103406.">
    <original>A</original>
    <variation>S</variation>
    <location>
        <position position="157"/>
    </location>
</feature>
<feature type="sequence variant" id="VAR_030615" description="In dbSNP:rs8107825.">
    <original>V</original>
    <variation>A</variation>
    <location>
        <position position="159"/>
    </location>
</feature>
<feature type="sequence variant" id="VAR_030616" description="In dbSNP:rs8104246.">
    <original>R</original>
    <variation>C</variation>
    <location>
        <position position="163"/>
    </location>
</feature>
<feature type="sequence variant" id="VAR_030617" description="In dbSNP:rs17304380." evidence="5">
    <original>R</original>
    <variation>H</variation>
    <location>
        <position position="163"/>
    </location>
</feature>
<feature type="sequence variant" id="VAR_030618" description="In dbSNP:rs16992985.">
    <original>D</original>
    <variation>N</variation>
    <location>
        <position position="192"/>
    </location>
</feature>
<feature type="mutagenesis site" description="Abolishes glycosylation; when associated with S-152 and S-229." evidence="6">
    <original>N</original>
    <variation>S</variation>
    <location>
        <position position="107"/>
    </location>
</feature>
<feature type="mutagenesis site" description="Abolishes glycosylation; when associated with S-107 and S-229." evidence="6">
    <original>N</original>
    <variation>S</variation>
    <location>
        <position position="152"/>
    </location>
</feature>
<feature type="mutagenesis site" description="Abolishes glycosylation; when associated with S-107 and S-152." evidence="6">
    <original>N</original>
    <variation>S</variation>
    <location>
        <position position="229"/>
    </location>
</feature>
<feature type="mutagenesis site" description="Abolished E3 ubiquitin-protein ligase activity." evidence="6 8">
    <original>HTYH</original>
    <variation>WTYW</variation>
    <location>
        <begin position="329"/>
        <end position="332"/>
    </location>
</feature>
<feature type="sequence conflict" description="In Ref. 4; AAH17592." evidence="10" ref="4">
    <original>AIV</original>
    <variation>SIA</variation>
    <location>
        <begin position="157"/>
        <end position="159"/>
    </location>
</feature>
<sequence>MPLCRPEHLMPRASRVPVAASLPLSHAVIPTQLPSRPGHRPPGRPRRCPKASCLPPPVGPSSTQTAKRVTMGWPRPGRALVAVKALLVLSLLQVPAQAVVRAVLEDNSSSVDFADLPALFGVPLAPEGIRGYLMEVKPANACHPIEAPRLGNRSLGAIVLIRRYDCTFDLKVLNAQRAGFEAAIVHNVHSDDLVSMTHVYEDLRGQIAIPSVFVSEAASQDLRVILGCNKSAHALLLPDDPPCHDLGCHPVLTVSWVLGCTLALVVSAFFVLNHLWLWAQACCSHRRPVKTSTCQKAQVRTFTWHNDLCAICLDEYEEGDQLKILPCSHTYHCKCIDPWFSQAPRRSCPVCKQSVAATEDSFDSTTYSFRDEDPSLPGHRPPIWAIQVQLRSRRLELLGRASPHCHCSTTSLEAEYTTVSSAPPEAPGQ</sequence>
<proteinExistence type="evidence at protein level"/>
<dbReference type="EC" id="2.3.2.27" evidence="8 11"/>
<dbReference type="EMBL" id="AK292251">
    <property type="protein sequence ID" value="BAF84940.1"/>
    <property type="molecule type" value="mRNA"/>
</dbReference>
<dbReference type="EMBL" id="AC005764">
    <property type="protein sequence ID" value="AAC62428.1"/>
    <property type="status" value="ALT_INIT"/>
    <property type="molecule type" value="Genomic_DNA"/>
</dbReference>
<dbReference type="EMBL" id="CH471139">
    <property type="protein sequence ID" value="EAW69169.1"/>
    <property type="molecule type" value="Genomic_DNA"/>
</dbReference>
<dbReference type="EMBL" id="BC017592">
    <property type="protein sequence ID" value="AAH17592.2"/>
    <property type="molecule type" value="mRNA"/>
</dbReference>
<dbReference type="CCDS" id="CCDS42475.1"/>
<dbReference type="RefSeq" id="NP_859061.3">
    <property type="nucleotide sequence ID" value="NM_181710.3"/>
</dbReference>
<dbReference type="SMR" id="Q8WWF5"/>
<dbReference type="BioGRID" id="127116">
    <property type="interactions" value="170"/>
</dbReference>
<dbReference type="FunCoup" id="Q8WWF5">
    <property type="interactions" value="115"/>
</dbReference>
<dbReference type="IntAct" id="Q8WWF5">
    <property type="interactions" value="85"/>
</dbReference>
<dbReference type="STRING" id="9606.ENSP00000222033"/>
<dbReference type="GlyCosmos" id="Q8WWF5">
    <property type="glycosylation" value="3 sites, No reported glycans"/>
</dbReference>
<dbReference type="GlyGen" id="Q8WWF5">
    <property type="glycosylation" value="3 sites"/>
</dbReference>
<dbReference type="iPTMnet" id="Q8WWF5"/>
<dbReference type="PhosphoSitePlus" id="Q8WWF5"/>
<dbReference type="BioMuta" id="ZNRF4"/>
<dbReference type="DMDM" id="126253848"/>
<dbReference type="MassIVE" id="Q8WWF5"/>
<dbReference type="PaxDb" id="9606-ENSP00000222033"/>
<dbReference type="PeptideAtlas" id="Q8WWF5"/>
<dbReference type="ProteomicsDB" id="74881"/>
<dbReference type="Antibodypedia" id="2299">
    <property type="antibodies" value="108 antibodies from 18 providers"/>
</dbReference>
<dbReference type="DNASU" id="148066"/>
<dbReference type="Ensembl" id="ENST00000222033.6">
    <property type="protein sequence ID" value="ENSP00000222033.4"/>
    <property type="gene ID" value="ENSG00000105428.6"/>
</dbReference>
<dbReference type="GeneID" id="148066"/>
<dbReference type="KEGG" id="hsa:148066"/>
<dbReference type="MANE-Select" id="ENST00000222033.6">
    <property type="protein sequence ID" value="ENSP00000222033.4"/>
    <property type="RefSeq nucleotide sequence ID" value="NM_181710.4"/>
    <property type="RefSeq protein sequence ID" value="NP_859061.3"/>
</dbReference>
<dbReference type="UCSC" id="uc002mca.5">
    <property type="organism name" value="human"/>
</dbReference>
<dbReference type="AGR" id="HGNC:17726"/>
<dbReference type="CTD" id="148066"/>
<dbReference type="GeneCards" id="ZNRF4"/>
<dbReference type="HGNC" id="HGNC:17726">
    <property type="gene designation" value="ZNRF4"/>
</dbReference>
<dbReference type="HPA" id="ENSG00000105428">
    <property type="expression patterns" value="Tissue enriched (testis)"/>
</dbReference>
<dbReference type="MIM" id="612063">
    <property type="type" value="gene"/>
</dbReference>
<dbReference type="neXtProt" id="NX_Q8WWF5"/>
<dbReference type="OpenTargets" id="ENSG00000105428"/>
<dbReference type="PharmGKB" id="PA134943871"/>
<dbReference type="VEuPathDB" id="HostDB:ENSG00000105428"/>
<dbReference type="eggNOG" id="KOG4628">
    <property type="taxonomic scope" value="Eukaryota"/>
</dbReference>
<dbReference type="GeneTree" id="ENSGT00940000163061"/>
<dbReference type="HOGENOM" id="CLU_035275_1_0_1"/>
<dbReference type="InParanoid" id="Q8WWF5"/>
<dbReference type="OMA" id="WFSQAPR"/>
<dbReference type="OrthoDB" id="8062037at2759"/>
<dbReference type="PAN-GO" id="Q8WWF5">
    <property type="GO annotations" value="2 GO annotations based on evolutionary models"/>
</dbReference>
<dbReference type="PhylomeDB" id="Q8WWF5"/>
<dbReference type="TreeFam" id="TF317486"/>
<dbReference type="PathwayCommons" id="Q8WWF5"/>
<dbReference type="SignaLink" id="Q8WWF5"/>
<dbReference type="SIGNOR" id="Q8WWF5"/>
<dbReference type="UniPathway" id="UPA00143"/>
<dbReference type="BioGRID-ORCS" id="148066">
    <property type="hits" value="8 hits in 1182 CRISPR screens"/>
</dbReference>
<dbReference type="GenomeRNAi" id="148066"/>
<dbReference type="Pharos" id="Q8WWF5">
    <property type="development level" value="Tbio"/>
</dbReference>
<dbReference type="PRO" id="PR:Q8WWF5"/>
<dbReference type="Proteomes" id="UP000005640">
    <property type="component" value="Chromosome 19"/>
</dbReference>
<dbReference type="RNAct" id="Q8WWF5">
    <property type="molecule type" value="protein"/>
</dbReference>
<dbReference type="Bgee" id="ENSG00000105428">
    <property type="expression patterns" value="Expressed in right testis and 44 other cell types or tissues"/>
</dbReference>
<dbReference type="GO" id="GO:0005737">
    <property type="term" value="C:cytoplasm"/>
    <property type="evidence" value="ECO:0000318"/>
    <property type="project" value="GO_Central"/>
</dbReference>
<dbReference type="GO" id="GO:0005783">
    <property type="term" value="C:endoplasmic reticulum"/>
    <property type="evidence" value="ECO:0000314"/>
    <property type="project" value="UniProtKB"/>
</dbReference>
<dbReference type="GO" id="GO:0005789">
    <property type="term" value="C:endoplasmic reticulum membrane"/>
    <property type="evidence" value="ECO:0000314"/>
    <property type="project" value="UniProtKB"/>
</dbReference>
<dbReference type="GO" id="GO:0061630">
    <property type="term" value="F:ubiquitin protein ligase activity"/>
    <property type="evidence" value="ECO:0000314"/>
    <property type="project" value="UniProtKB"/>
</dbReference>
<dbReference type="GO" id="GO:0008270">
    <property type="term" value="F:zinc ion binding"/>
    <property type="evidence" value="ECO:0007669"/>
    <property type="project" value="UniProtKB-KW"/>
</dbReference>
<dbReference type="GO" id="GO:0045786">
    <property type="term" value="P:negative regulation of cell cycle"/>
    <property type="evidence" value="ECO:0000318"/>
    <property type="project" value="GO_Central"/>
</dbReference>
<dbReference type="GO" id="GO:0070433">
    <property type="term" value="P:negative regulation of nucleotide-binding oligomerization domain containing 2 signaling pathway"/>
    <property type="evidence" value="ECO:0000314"/>
    <property type="project" value="UniProt"/>
</dbReference>
<dbReference type="GO" id="GO:0043161">
    <property type="term" value="P:proteasome-mediated ubiquitin-dependent protein catabolic process"/>
    <property type="evidence" value="ECO:0000314"/>
    <property type="project" value="UniProt"/>
</dbReference>
<dbReference type="GO" id="GO:0016567">
    <property type="term" value="P:protein ubiquitination"/>
    <property type="evidence" value="ECO:0007669"/>
    <property type="project" value="UniProtKB-UniPathway"/>
</dbReference>
<dbReference type="GO" id="GO:0006511">
    <property type="term" value="P:ubiquitin-dependent protein catabolic process"/>
    <property type="evidence" value="ECO:0000314"/>
    <property type="project" value="UniProtKB"/>
</dbReference>
<dbReference type="CDD" id="cd02123">
    <property type="entry name" value="PA_C_RZF_like"/>
    <property type="match status" value="1"/>
</dbReference>
<dbReference type="CDD" id="cd16665">
    <property type="entry name" value="RING-H2_RNF13-like"/>
    <property type="match status" value="1"/>
</dbReference>
<dbReference type="FunFam" id="3.50.30.30:FF:000013">
    <property type="entry name" value="E3 ubiquitin-protein ligase RNF167"/>
    <property type="match status" value="1"/>
</dbReference>
<dbReference type="FunFam" id="3.30.40.10:FF:000501">
    <property type="entry name" value="E3 ubiquitin-protein ligase ZNRF4"/>
    <property type="match status" value="1"/>
</dbReference>
<dbReference type="Gene3D" id="3.50.30.30">
    <property type="match status" value="1"/>
</dbReference>
<dbReference type="Gene3D" id="3.30.40.10">
    <property type="entry name" value="Zinc/RING finger domain, C3HC4 (zinc finger)"/>
    <property type="match status" value="1"/>
</dbReference>
<dbReference type="InterPro" id="IPR051653">
    <property type="entry name" value="E3_ligase_sorting_rcpt"/>
</dbReference>
<dbReference type="InterPro" id="IPR046450">
    <property type="entry name" value="PA_dom_sf"/>
</dbReference>
<dbReference type="InterPro" id="IPR003137">
    <property type="entry name" value="PA_domain"/>
</dbReference>
<dbReference type="InterPro" id="IPR001841">
    <property type="entry name" value="Znf_RING"/>
</dbReference>
<dbReference type="InterPro" id="IPR013083">
    <property type="entry name" value="Znf_RING/FYVE/PHD"/>
</dbReference>
<dbReference type="InterPro" id="IPR044744">
    <property type="entry name" value="ZNRF4/RNF13/RNF167_PA"/>
</dbReference>
<dbReference type="PANTHER" id="PTHR47168:SF1">
    <property type="entry name" value="OS02G0798600 PROTEIN"/>
    <property type="match status" value="1"/>
</dbReference>
<dbReference type="PANTHER" id="PTHR47168">
    <property type="entry name" value="RING ZINC FINGER DOMAIN SUPERFAMILY PROTEIN-RELATED"/>
    <property type="match status" value="1"/>
</dbReference>
<dbReference type="Pfam" id="PF02225">
    <property type="entry name" value="PA"/>
    <property type="match status" value="1"/>
</dbReference>
<dbReference type="Pfam" id="PF13639">
    <property type="entry name" value="zf-RING_2"/>
    <property type="match status" value="1"/>
</dbReference>
<dbReference type="SMART" id="SM00184">
    <property type="entry name" value="RING"/>
    <property type="match status" value="1"/>
</dbReference>
<dbReference type="SUPFAM" id="SSF52025">
    <property type="entry name" value="PA domain"/>
    <property type="match status" value="1"/>
</dbReference>
<dbReference type="SUPFAM" id="SSF57850">
    <property type="entry name" value="RING/U-box"/>
    <property type="match status" value="1"/>
</dbReference>
<dbReference type="PROSITE" id="PS50089">
    <property type="entry name" value="ZF_RING_2"/>
    <property type="match status" value="1"/>
</dbReference>
<organism>
    <name type="scientific">Homo sapiens</name>
    <name type="common">Human</name>
    <dbReference type="NCBI Taxonomy" id="9606"/>
    <lineage>
        <taxon>Eukaryota</taxon>
        <taxon>Metazoa</taxon>
        <taxon>Chordata</taxon>
        <taxon>Craniata</taxon>
        <taxon>Vertebrata</taxon>
        <taxon>Euteleostomi</taxon>
        <taxon>Mammalia</taxon>
        <taxon>Eutheria</taxon>
        <taxon>Euarchontoglires</taxon>
        <taxon>Primates</taxon>
        <taxon>Haplorrhini</taxon>
        <taxon>Catarrhini</taxon>
        <taxon>Hominidae</taxon>
        <taxon>Homo</taxon>
    </lineage>
</organism>